<keyword id="KW-0687">Ribonucleoprotein</keyword>
<keyword id="KW-0689">Ribosomal protein</keyword>
<keyword id="KW-0694">RNA-binding</keyword>
<keyword id="KW-0699">rRNA-binding</keyword>
<name>RS15_BUCA5</name>
<dbReference type="EMBL" id="CP001161">
    <property type="protein sequence ID" value="ACL30730.1"/>
    <property type="molecule type" value="Genomic_DNA"/>
</dbReference>
<dbReference type="RefSeq" id="WP_009874332.1">
    <property type="nucleotide sequence ID" value="NC_011833.1"/>
</dbReference>
<dbReference type="SMR" id="B8D9F9"/>
<dbReference type="KEGG" id="bap:BUAP5A_367"/>
<dbReference type="HOGENOM" id="CLU_148518_0_0_6"/>
<dbReference type="OrthoDB" id="9799262at2"/>
<dbReference type="Proteomes" id="UP000006904">
    <property type="component" value="Chromosome"/>
</dbReference>
<dbReference type="GO" id="GO:0022627">
    <property type="term" value="C:cytosolic small ribosomal subunit"/>
    <property type="evidence" value="ECO:0007669"/>
    <property type="project" value="TreeGrafter"/>
</dbReference>
<dbReference type="GO" id="GO:0019843">
    <property type="term" value="F:rRNA binding"/>
    <property type="evidence" value="ECO:0007669"/>
    <property type="project" value="UniProtKB-UniRule"/>
</dbReference>
<dbReference type="GO" id="GO:0003735">
    <property type="term" value="F:structural constituent of ribosome"/>
    <property type="evidence" value="ECO:0007669"/>
    <property type="project" value="InterPro"/>
</dbReference>
<dbReference type="GO" id="GO:0006412">
    <property type="term" value="P:translation"/>
    <property type="evidence" value="ECO:0007669"/>
    <property type="project" value="UniProtKB-UniRule"/>
</dbReference>
<dbReference type="CDD" id="cd00353">
    <property type="entry name" value="Ribosomal_S15p_S13e"/>
    <property type="match status" value="1"/>
</dbReference>
<dbReference type="Gene3D" id="6.10.250.3130">
    <property type="match status" value="1"/>
</dbReference>
<dbReference type="Gene3D" id="1.10.287.10">
    <property type="entry name" value="S15/NS1, RNA-binding"/>
    <property type="match status" value="1"/>
</dbReference>
<dbReference type="HAMAP" id="MF_01343_B">
    <property type="entry name" value="Ribosomal_uS15_B"/>
    <property type="match status" value="1"/>
</dbReference>
<dbReference type="InterPro" id="IPR000589">
    <property type="entry name" value="Ribosomal_uS15"/>
</dbReference>
<dbReference type="InterPro" id="IPR005290">
    <property type="entry name" value="Ribosomal_uS15_bac-type"/>
</dbReference>
<dbReference type="InterPro" id="IPR009068">
    <property type="entry name" value="uS15_NS1_RNA-bd_sf"/>
</dbReference>
<dbReference type="NCBIfam" id="TIGR00952">
    <property type="entry name" value="S15_bact"/>
    <property type="match status" value="1"/>
</dbReference>
<dbReference type="PANTHER" id="PTHR23321">
    <property type="entry name" value="RIBOSOMAL PROTEIN S15, BACTERIAL AND ORGANELLAR"/>
    <property type="match status" value="1"/>
</dbReference>
<dbReference type="PANTHER" id="PTHR23321:SF26">
    <property type="entry name" value="SMALL RIBOSOMAL SUBUNIT PROTEIN US15M"/>
    <property type="match status" value="1"/>
</dbReference>
<dbReference type="Pfam" id="PF00312">
    <property type="entry name" value="Ribosomal_S15"/>
    <property type="match status" value="1"/>
</dbReference>
<dbReference type="SMART" id="SM01387">
    <property type="entry name" value="Ribosomal_S15"/>
    <property type="match status" value="1"/>
</dbReference>
<dbReference type="SUPFAM" id="SSF47060">
    <property type="entry name" value="S15/NS1 RNA-binding domain"/>
    <property type="match status" value="1"/>
</dbReference>
<dbReference type="PROSITE" id="PS00362">
    <property type="entry name" value="RIBOSOMAL_S15"/>
    <property type="match status" value="1"/>
</dbReference>
<gene>
    <name evidence="1" type="primary">rpsO</name>
    <name type="ordered locus">BUAP5A_367</name>
</gene>
<organism>
    <name type="scientific">Buchnera aphidicola subsp. Acyrthosiphon pisum (strain 5A)</name>
    <dbReference type="NCBI Taxonomy" id="563178"/>
    <lineage>
        <taxon>Bacteria</taxon>
        <taxon>Pseudomonadati</taxon>
        <taxon>Pseudomonadota</taxon>
        <taxon>Gammaproteobacteria</taxon>
        <taxon>Enterobacterales</taxon>
        <taxon>Erwiniaceae</taxon>
        <taxon>Buchnera</taxon>
    </lineage>
</organism>
<evidence type="ECO:0000255" key="1">
    <source>
        <dbReference type="HAMAP-Rule" id="MF_01343"/>
    </source>
</evidence>
<evidence type="ECO:0000305" key="2"/>
<reference key="1">
    <citation type="journal article" date="2009" name="Science">
        <title>The dynamics and time scale of ongoing genomic erosion in symbiotic bacteria.</title>
        <authorList>
            <person name="Moran N.A."/>
            <person name="McLaughlin H.J."/>
            <person name="Sorek R."/>
        </authorList>
    </citation>
    <scope>NUCLEOTIDE SEQUENCE [LARGE SCALE GENOMIC DNA]</scope>
    <source>
        <strain>5A</strain>
    </source>
</reference>
<comment type="function">
    <text evidence="1">One of the primary rRNA binding proteins, it binds directly to 16S rRNA where it helps nucleate assembly of the platform of the 30S subunit by binding and bridging several RNA helices of the 16S rRNA.</text>
</comment>
<comment type="function">
    <text evidence="1">Forms an intersubunit bridge (bridge B4) with the 23S rRNA of the 50S subunit in the ribosome.</text>
</comment>
<comment type="subunit">
    <text evidence="1">Part of the 30S ribosomal subunit. Forms a bridge to the 50S subunit in the 70S ribosome, contacting the 23S rRNA.</text>
</comment>
<comment type="similarity">
    <text evidence="1">Belongs to the universal ribosomal protein uS15 family.</text>
</comment>
<sequence>MSLSAIDTKKIILKYGKSEQNSGITEVQVVLLTNQINYLQIHFSQHKKDHCSRRGLLNMVSKRRKLLDYLKKKNISRYSALIEDLHLRR</sequence>
<accession>B8D9F9</accession>
<proteinExistence type="inferred from homology"/>
<protein>
    <recommendedName>
        <fullName evidence="1">Small ribosomal subunit protein uS15</fullName>
    </recommendedName>
    <alternativeName>
        <fullName evidence="2">30S ribosomal protein S15</fullName>
    </alternativeName>
</protein>
<feature type="chain" id="PRO_1000166406" description="Small ribosomal subunit protein uS15">
    <location>
        <begin position="1"/>
        <end position="89"/>
    </location>
</feature>